<accession>Q6F6B5</accession>
<accession>Q0WT28</accession>
<accession>Q9C9P7</accession>
<accession>Q9SSG9</accession>
<reference key="1">
    <citation type="journal article" date="2004" name="Plant Cell Physiol.">
        <title>ARC3, a chloroplast division factor, is a chimera of prokaryotic FtsZ and part of eukaryotic phosphatidylinositol-4-phosphate 5-kinase.</title>
        <authorList>
            <person name="Shimada H."/>
            <person name="Koizumi M."/>
            <person name="Kuroki K."/>
            <person name="Mochizuki M."/>
            <person name="Fujimoto H."/>
            <person name="Ohta H."/>
            <person name="Masuda T."/>
            <person name="Takamiya K."/>
        </authorList>
    </citation>
    <scope>NUCLEOTIDE SEQUENCE [MRNA]</scope>
    <scope>FUNCTION</scope>
    <scope>DISRUPTION PHENOTYPE</scope>
    <scope>SUBCELLULAR LOCATION</scope>
    <source>
        <strain>cv. Columbia</strain>
        <strain>cv. Landsberg erecta</strain>
    </source>
</reference>
<reference key="2">
    <citation type="journal article" date="2000" name="Nature">
        <title>Sequence and analysis of chromosome 1 of the plant Arabidopsis thaliana.</title>
        <authorList>
            <person name="Theologis A."/>
            <person name="Ecker J.R."/>
            <person name="Palm C.J."/>
            <person name="Federspiel N.A."/>
            <person name="Kaul S."/>
            <person name="White O."/>
            <person name="Alonso J."/>
            <person name="Altafi H."/>
            <person name="Araujo R."/>
            <person name="Bowman C.L."/>
            <person name="Brooks S.Y."/>
            <person name="Buehler E."/>
            <person name="Chan A."/>
            <person name="Chao Q."/>
            <person name="Chen H."/>
            <person name="Cheuk R.F."/>
            <person name="Chin C.W."/>
            <person name="Chung M.K."/>
            <person name="Conn L."/>
            <person name="Conway A.B."/>
            <person name="Conway A.R."/>
            <person name="Creasy T.H."/>
            <person name="Dewar K."/>
            <person name="Dunn P."/>
            <person name="Etgu P."/>
            <person name="Feldblyum T.V."/>
            <person name="Feng J.-D."/>
            <person name="Fong B."/>
            <person name="Fujii C.Y."/>
            <person name="Gill J.E."/>
            <person name="Goldsmith A.D."/>
            <person name="Haas B."/>
            <person name="Hansen N.F."/>
            <person name="Hughes B."/>
            <person name="Huizar L."/>
            <person name="Hunter J.L."/>
            <person name="Jenkins J."/>
            <person name="Johnson-Hopson C."/>
            <person name="Khan S."/>
            <person name="Khaykin E."/>
            <person name="Kim C.J."/>
            <person name="Koo H.L."/>
            <person name="Kremenetskaia I."/>
            <person name="Kurtz D.B."/>
            <person name="Kwan A."/>
            <person name="Lam B."/>
            <person name="Langin-Hooper S."/>
            <person name="Lee A."/>
            <person name="Lee J.M."/>
            <person name="Lenz C.A."/>
            <person name="Li J.H."/>
            <person name="Li Y.-P."/>
            <person name="Lin X."/>
            <person name="Liu S.X."/>
            <person name="Liu Z.A."/>
            <person name="Luros J.S."/>
            <person name="Maiti R."/>
            <person name="Marziali A."/>
            <person name="Militscher J."/>
            <person name="Miranda M."/>
            <person name="Nguyen M."/>
            <person name="Nierman W.C."/>
            <person name="Osborne B.I."/>
            <person name="Pai G."/>
            <person name="Peterson J."/>
            <person name="Pham P.K."/>
            <person name="Rizzo M."/>
            <person name="Rooney T."/>
            <person name="Rowley D."/>
            <person name="Sakano H."/>
            <person name="Salzberg S.L."/>
            <person name="Schwartz J.R."/>
            <person name="Shinn P."/>
            <person name="Southwick A.M."/>
            <person name="Sun H."/>
            <person name="Tallon L.J."/>
            <person name="Tambunga G."/>
            <person name="Toriumi M.J."/>
            <person name="Town C.D."/>
            <person name="Utterback T."/>
            <person name="Van Aken S."/>
            <person name="Vaysberg M."/>
            <person name="Vysotskaia V.S."/>
            <person name="Walker M."/>
            <person name="Wu D."/>
            <person name="Yu G."/>
            <person name="Fraser C.M."/>
            <person name="Venter J.C."/>
            <person name="Davis R.W."/>
        </authorList>
    </citation>
    <scope>NUCLEOTIDE SEQUENCE [LARGE SCALE GENOMIC DNA]</scope>
    <source>
        <strain>cv. Columbia</strain>
    </source>
</reference>
<reference key="3">
    <citation type="journal article" date="2017" name="Plant J.">
        <title>Araport11: a complete reannotation of the Arabidopsis thaliana reference genome.</title>
        <authorList>
            <person name="Cheng C.Y."/>
            <person name="Krishnakumar V."/>
            <person name="Chan A.P."/>
            <person name="Thibaud-Nissen F."/>
            <person name="Schobel S."/>
            <person name="Town C.D."/>
        </authorList>
    </citation>
    <scope>GENOME REANNOTATION</scope>
    <source>
        <strain>cv. Columbia</strain>
    </source>
</reference>
<reference key="4">
    <citation type="submission" date="2006-07" db="EMBL/GenBank/DDBJ databases">
        <title>Large-scale analysis of RIKEN Arabidopsis full-length (RAFL) cDNAs.</title>
        <authorList>
            <person name="Totoki Y."/>
            <person name="Seki M."/>
            <person name="Ishida J."/>
            <person name="Nakajima M."/>
            <person name="Enju A."/>
            <person name="Kamiya A."/>
            <person name="Narusaka M."/>
            <person name="Shin-i T."/>
            <person name="Nakagawa M."/>
            <person name="Sakamoto N."/>
            <person name="Oishi K."/>
            <person name="Kohara Y."/>
            <person name="Kobayashi M."/>
            <person name="Toyoda A."/>
            <person name="Sakaki Y."/>
            <person name="Sakurai T."/>
            <person name="Iida K."/>
            <person name="Akiyama K."/>
            <person name="Satou M."/>
            <person name="Toyoda T."/>
            <person name="Konagaya A."/>
            <person name="Carninci P."/>
            <person name="Kawai J."/>
            <person name="Hayashizaki Y."/>
            <person name="Shinozaki K."/>
        </authorList>
    </citation>
    <scope>NUCLEOTIDE SEQUENCE [LARGE SCALE MRNA] OF 280-741</scope>
    <source>
        <strain>cv. Columbia</strain>
    </source>
</reference>
<reference key="5">
    <citation type="journal article" date="1999" name="Plant J.">
        <title>The distinctive roles of five different ARC genes in the chloroplast division process in Arabidopsis.</title>
        <authorList>
            <person name="Marrison J.L."/>
            <person name="Rutherford S.M."/>
            <person name="Robertson E.J."/>
            <person name="Lister C."/>
            <person name="Dean C."/>
            <person name="Leech R.M."/>
        </authorList>
    </citation>
    <scope>FUNCTION</scope>
    <scope>DISRUPTION PHENOTYPE</scope>
    <source>
        <strain>cv. Landsberg erecta</strain>
        <strain>cv. Wassilewskija</strain>
    </source>
</reference>
<reference key="6">
    <citation type="journal article" date="2007" name="EMBO Rep.">
        <title>ARC3 is a stromal Z-ring accessory protein essential for plastid division.</title>
        <authorList>
            <person name="Maple J."/>
            <person name="Vojta L."/>
            <person name="Soll J."/>
            <person name="Moeller S.G."/>
        </authorList>
    </citation>
    <scope>FUNCTION</scope>
    <scope>DISRUPTION PHENOTYPE</scope>
    <scope>INTERACTION WITH FTSZ1; MIND1 AND MINE1</scope>
    <scope>SELF-INTERACTION</scope>
    <scope>SUBCELLULAR LOCATION</scope>
    <source>
        <strain>cv. Columbia</strain>
    </source>
</reference>
<reference key="7">
    <citation type="journal article" date="2007" name="Traffic">
        <title>Chloroplast division.</title>
        <authorList>
            <person name="Glynn J.M."/>
            <person name="Miyagishima S.-Y."/>
            <person name="Yoder D.W."/>
            <person name="Osteryoung K.W."/>
            <person name="Vitha S."/>
        </authorList>
    </citation>
    <scope>REVIEW</scope>
</reference>
<reference key="8">
    <citation type="journal article" date="2008" name="Biochem. J.">
        <title>In vivo quantitative relationship between plastid division proteins FtsZ1 and FtsZ2 and identification of ARC6 and ARC3 in a native FtsZ complex.</title>
        <authorList>
            <person name="McAndrew R.S."/>
            <person name="Olson B.J."/>
            <person name="Kadirjan-Kalbach D.K."/>
            <person name="Chi-Ham C.L."/>
            <person name="Vitha S."/>
            <person name="Froehlich J.E."/>
            <person name="Osteryoung K.W."/>
        </authorList>
    </citation>
    <scope>SUBUNIT</scope>
    <source>
        <strain>cv. Columbia</strain>
    </source>
</reference>
<reference key="9">
    <citation type="journal article" date="2008" name="Photochem. Photobiol.">
        <title>Effects of arc3, arc5 and arc6 mutations on plastid morphology and stromule formation in green and nongreen tissues of Arabidopsis thaliana.</title>
        <authorList>
            <person name="Holzinger A."/>
            <person name="Kwok E.Y."/>
            <person name="Hanson M.R."/>
        </authorList>
    </citation>
    <scope>FUNCTION</scope>
    <scope>DISRUPTION PHENOTYPE</scope>
    <source>
        <strain>cv. Columbia</strain>
        <strain>cv. Landsberg erecta</strain>
    </source>
</reference>
<reference key="10">
    <citation type="journal article" date="2009" name="Cell Res.">
        <title>CDP1, a novel component of chloroplast division site positioning system in Arabidopsis.</title>
        <authorList>
            <person name="Zhang M."/>
            <person name="Hu Y."/>
            <person name="Jia J."/>
            <person name="Li D."/>
            <person name="Zhang R."/>
            <person name="Gao H."/>
            <person name="He Y."/>
        </authorList>
    </citation>
    <scope>INTERACTION WITH CDP1</scope>
    <scope>SELF-INTERACTION</scope>
</reference>
<reference key="11">
    <citation type="journal article" date="2009" name="Plant J.">
        <title>PARC6, a novel chloroplast division factor, influences FtsZ assembly and is required for recruitment of PDV1 during chloroplast division in Arabidopsis.</title>
        <authorList>
            <person name="Glynn J.M."/>
            <person name="Yang Y."/>
            <person name="Vitha S."/>
            <person name="Schmitz A.J."/>
            <person name="Hemmes M."/>
            <person name="Miyagishima S.-Y."/>
            <person name="Osteryoung K.W."/>
        </authorList>
    </citation>
    <scope>INTERACTION WITH CDP1</scope>
</reference>
<reference key="12">
    <citation type="journal article" date="2013" name="PLoS ONE">
        <title>The chloroplast min system functions differentially in two specific nongreen plastids in Arabidopsis thaliana.</title>
        <authorList>
            <person name="Wang P."/>
            <person name="Zhang J."/>
            <person name="Su J."/>
            <person name="Wang P."/>
            <person name="Liu J."/>
            <person name="Liu B."/>
            <person name="Feng D."/>
            <person name="Wang J."/>
            <person name="Wang H."/>
        </authorList>
    </citation>
    <scope>FUNCTION</scope>
    <scope>DISRUPTION PHENOTYPE</scope>
    <source>
        <strain>cv. Columbia</strain>
        <strain>cv. Landsberg erecta</strain>
    </source>
</reference>
<reference key="13">
    <citation type="journal article" date="2015" name="Microsc. Microanal.">
        <title>FtsZ1/FtsZ2 turnover in chloroplasts and the role of ARC3.</title>
        <authorList>
            <person name="Johnson C.B."/>
            <person name="Shaik R."/>
            <person name="Abdallah R."/>
            <person name="Vitha S."/>
            <person name="Holzenburg A."/>
        </authorList>
    </citation>
    <scope>FUNCTION</scope>
    <scope>DISRUPTION PHENOTYPE</scope>
    <source>
        <strain>cv. Landsberg erecta</strain>
    </source>
</reference>
<reference key="14">
    <citation type="journal article" date="2016" name="Plant Physiol.">
        <title>Roles of Arabidopsis PARC6 in Coordination of the Chloroplast Division Complex and Negative Regulation of FtsZ Assembly.</title>
        <authorList>
            <person name="Zhang M."/>
            <person name="Chen C."/>
            <person name="Froehlich J.E."/>
            <person name="TerBush A.D."/>
            <person name="Osteryoung K.W."/>
        </authorList>
    </citation>
    <scope>INTERACTION WITH CDP1/PARC6</scope>
    <scope>DOMAIN</scope>
    <source>
        <strain>cv. Columbia</strain>
    </source>
</reference>
<reference key="15">
    <citation type="journal article" date="2018" name="Biochem. J.">
        <title>Chloroplast division protein ARC3 acts on FtsZ2 by preventing filament bundling and enhancing GTPase activity.</title>
        <authorList>
            <person name="Shaik R.S."/>
            <person name="Sung M.W."/>
            <person name="Vitha S."/>
            <person name="Holzenburg A."/>
        </authorList>
    </citation>
    <scope>FUNCTION</scope>
    <scope>DOMAIN</scope>
    <scope>INTERACTION WITH FTSZ2-1 AND ARC6</scope>
</reference>
<reference key="16">
    <citation type="journal article" date="2018" name="Plant Cell">
        <title>MCD1 associates with FtsZ filaments via the membrane-tethering protein ARC6 to guide chloroplast division.</title>
        <authorList>
            <person name="Chen L."/>
            <person name="Sun B."/>
            <person name="Gao W."/>
            <person name="Zhang Q.Y."/>
            <person name="Yuan H."/>
            <person name="Zhang M."/>
        </authorList>
    </citation>
    <scope>FUNCTION</scope>
    <scope>DISRUPTION PHENOTYPE</scope>
    <source>
        <strain>cv. Columbia</strain>
    </source>
</reference>
<reference key="17">
    <citation type="journal article" date="2018" name="Plant Signal. Behav.">
        <title>Moonlighting proteins: putting the spotlight on enzymes.</title>
        <authorList>
            <person name="Abolhassani Rad S."/>
            <person name="Clayton E.J."/>
            <person name="Cornelius E.J."/>
            <person name="Howes T.R."/>
            <person name="Kohalmi S.E."/>
        </authorList>
    </citation>
    <scope>DISRUPTION PHENOTYPE</scope>
    <source>
        <strain>cv. Columbia</strain>
    </source>
</reference>
<reference key="18">
    <citation type="journal article" date="2019" name="Plant Cell">
        <title>ARC3 activation by PARC6 promotes FtsZ-ring remodeling at the chloroplast division site.</title>
        <authorList>
            <person name="Chen C."/>
            <person name="Cao L."/>
            <person name="Yang Y."/>
            <person name="Porter K.J."/>
            <person name="Osteryoung K.W."/>
        </authorList>
    </citation>
    <scope>FUNCTION</scope>
    <scope>MUTAGENESIS OF GLY-632; GLY-641; GLY-643; GLY-655; GLY-664 AND GLY-666</scope>
    <scope>DISRUPTION PHENOTYPE</scope>
    <scope>SUBUNIT</scope>
    <scope>SUBCELLULAR LOCATION</scope>
    <scope>DOMAIN</scope>
    <scope>INTERACTION WITH FTSZ2-1 AND FTSZ1</scope>
    <source>
        <strain>cv. Columbia</strain>
    </source>
</reference>
<keyword id="KW-0150">Chloroplast</keyword>
<keyword id="KW-0472">Membrane</keyword>
<keyword id="KW-0934">Plastid</keyword>
<keyword id="KW-1002">Plastid outer membrane</keyword>
<keyword id="KW-1185">Reference proteome</keyword>
<keyword id="KW-0677">Repeat</keyword>
<keyword id="KW-0809">Transit peptide</keyword>
<gene>
    <name evidence="17" type="primary">ARC3</name>
    <name evidence="20" type="ordered locus">At1g75010</name>
    <name evidence="21" type="ORF">F25A4.3</name>
    <name evidence="22" type="ORF">F9E10.14</name>
</gene>
<protein>
    <recommendedName>
        <fullName evidence="17">Protein ACCUMULATION AND REPLICATION OF CHLOROPLASTS 3, chloroplastic</fullName>
    </recommendedName>
</protein>
<organism>
    <name type="scientific">Arabidopsis thaliana</name>
    <name type="common">Mouse-ear cress</name>
    <dbReference type="NCBI Taxonomy" id="3702"/>
    <lineage>
        <taxon>Eukaryota</taxon>
        <taxon>Viridiplantae</taxon>
        <taxon>Streptophyta</taxon>
        <taxon>Embryophyta</taxon>
        <taxon>Tracheophyta</taxon>
        <taxon>Spermatophyta</taxon>
        <taxon>Magnoliopsida</taxon>
        <taxon>eudicotyledons</taxon>
        <taxon>Gunneridae</taxon>
        <taxon>Pentapetalae</taxon>
        <taxon>rosids</taxon>
        <taxon>malvids</taxon>
        <taxon>Brassicales</taxon>
        <taxon>Brassicaceae</taxon>
        <taxon>Camelineae</taxon>
        <taxon>Arabidopsis</taxon>
    </lineage>
</organism>
<evidence type="ECO:0000255" key="1"/>
<evidence type="ECO:0000256" key="2">
    <source>
        <dbReference type="SAM" id="MobiDB-lite"/>
    </source>
</evidence>
<evidence type="ECO:0000269" key="3">
    <source>
    </source>
</evidence>
<evidence type="ECO:0000269" key="4">
    <source>
    </source>
</evidence>
<evidence type="ECO:0000269" key="5">
    <source>
    </source>
</evidence>
<evidence type="ECO:0000269" key="6">
    <source>
    </source>
</evidence>
<evidence type="ECO:0000269" key="7">
    <source>
    </source>
</evidence>
<evidence type="ECO:0000269" key="8">
    <source>
    </source>
</evidence>
<evidence type="ECO:0000269" key="9">
    <source>
    </source>
</evidence>
<evidence type="ECO:0000269" key="10">
    <source>
    </source>
</evidence>
<evidence type="ECO:0000269" key="11">
    <source>
    </source>
</evidence>
<evidence type="ECO:0000269" key="12">
    <source>
    </source>
</evidence>
<evidence type="ECO:0000269" key="13">
    <source>
    </source>
</evidence>
<evidence type="ECO:0000269" key="14">
    <source>
    </source>
</evidence>
<evidence type="ECO:0000269" key="15">
    <source>
    </source>
</evidence>
<evidence type="ECO:0000269" key="16">
    <source>
    </source>
</evidence>
<evidence type="ECO:0000303" key="17">
    <source>
    </source>
</evidence>
<evidence type="ECO:0000303" key="18">
    <source>
    </source>
</evidence>
<evidence type="ECO:0000305" key="19"/>
<evidence type="ECO:0000312" key="20">
    <source>
        <dbReference type="Araport" id="AT1G75010"/>
    </source>
</evidence>
<evidence type="ECO:0000312" key="21">
    <source>
        <dbReference type="EMBL" id="AAD55276.1"/>
    </source>
</evidence>
<evidence type="ECO:0000312" key="22">
    <source>
        <dbReference type="EMBL" id="AAG51935.1"/>
    </source>
</evidence>
<feature type="transit peptide" description="Chloroplast" evidence="1">
    <location>
        <begin position="1"/>
        <end position="41"/>
    </location>
</feature>
<feature type="chain" id="PRO_0000406230" description="Protein ACCUMULATION AND REPLICATION OF CHLOROPLASTS 3, chloroplastic">
    <location>
        <begin position="42"/>
        <end position="741"/>
    </location>
</feature>
<feature type="repeat" description="MORN 1" evidence="1">
    <location>
        <begin position="612"/>
        <end position="628"/>
    </location>
</feature>
<feature type="repeat" description="MORN 2" evidence="1">
    <location>
        <begin position="630"/>
        <end position="652"/>
    </location>
</feature>
<feature type="repeat" description="MORN 3" evidence="1">
    <location>
        <begin position="653"/>
        <end position="675"/>
    </location>
</feature>
<feature type="region of interest" description="Disordered" evidence="2">
    <location>
        <begin position="444"/>
        <end position="465"/>
    </location>
</feature>
<feature type="region of interest" description="Disordered" evidence="2">
    <location>
        <begin position="539"/>
        <end position="558"/>
    </location>
</feature>
<feature type="compositionally biased region" description="Basic and acidic residues" evidence="2">
    <location>
        <begin position="451"/>
        <end position="465"/>
    </location>
</feature>
<feature type="compositionally biased region" description="Polar residues" evidence="2">
    <location>
        <begin position="546"/>
        <end position="558"/>
    </location>
</feature>
<feature type="mutagenesis site" description="Impaired interaction with CDP1/PARC6; when associated with A-641; A-643; A-655; A-664 and A-666." evidence="16">
    <original>G</original>
    <variation>A</variation>
    <location>
        <position position="632"/>
    </location>
</feature>
<feature type="mutagenesis site" description="Impaired interaction with CDP1/PARC6; when associated with A-632; A-643; A-655; A-664 and A-666." evidence="16">
    <original>G</original>
    <variation>A</variation>
    <location>
        <position position="641"/>
    </location>
</feature>
<feature type="mutagenesis site" description="Impaired interaction with CDP1/PARC6; when associated with A-632; A-641; A-655; A-664 and A-666." evidence="16">
    <original>G</original>
    <variation>A</variation>
    <location>
        <position position="643"/>
    </location>
</feature>
<feature type="mutagenesis site" description="Impaired interaction with CDP1/PARC6; when associated with A-632; A-641; A-643; A-664 and A-666." evidence="16">
    <original>G</original>
    <variation>A</variation>
    <location>
        <position position="655"/>
    </location>
</feature>
<feature type="mutagenesis site" description="Impaired interaction with CDP1/PARC6; when associated with A-632; A-641; A-643; A-655 and A-666." evidence="16">
    <original>G</original>
    <variation>A</variation>
    <location>
        <position position="664"/>
    </location>
</feature>
<feature type="mutagenesis site" description="Impaired interaction with CDP1/PARC6; when associated with A-632; A-641; A-643; A-655 and A-664." evidence="16">
    <original>G</original>
    <variation>A</variation>
    <location>
        <position position="666"/>
    </location>
</feature>
<feature type="sequence conflict" description="In Ref. 1; BAD26731." evidence="19" ref="1">
    <original>L</original>
    <variation>S</variation>
    <location>
        <position position="129"/>
    </location>
</feature>
<feature type="sequence conflict" description="In Ref. 1; BAD26731." evidence="19" ref="1">
    <original>V</original>
    <variation>E</variation>
    <location>
        <position position="371"/>
    </location>
</feature>
<feature type="sequence conflict" description="In Ref. 1; BAD26731." evidence="19" ref="1">
    <original>V</original>
    <variation>I</variation>
    <location>
        <position position="422"/>
    </location>
</feature>
<feature type="sequence conflict" description="In Ref. 1; BAD26731." evidence="19" ref="1">
    <original>I</original>
    <variation>V</variation>
    <location>
        <position position="429"/>
    </location>
</feature>
<feature type="sequence conflict" description="In Ref. 1; BAD26731." evidence="19" ref="1">
    <original>F</original>
    <variation>L</variation>
    <location>
        <position position="670"/>
    </location>
</feature>
<feature type="sequence conflict" description="In Ref. 4; BAE99720." evidence="19" ref="4">
    <original>V</original>
    <variation>A</variation>
    <location>
        <position position="730"/>
    </location>
</feature>
<comment type="function">
    <text evidence="3 4 5 7 10 11 13 14 16">Together with MIND1 and MCD1, regulates FtsZ ring positioning in chloroplasts in an ARC6-dependent manner (PubMed:29967285). Z-ring accessory protein involved in the initiation of plastid division and division site placement (might functionally replace bacterial MinC) (PubMed:23936263). Acts as a disassembly factor that accelerates fragmentation and depolymerization of existing FtsZ2 filaments by enhancing FTSZ2 GTPase activity, thus leading to the conversion of FTSZ2 bound GTP into GDP, a process which triggers FtsZ2 filaments destabilization (PubMed:25731613, PubMed:29138260). Prevents misplaced Z-ring formation at chloroplast stroma nondivision sites (PubMed:30824505). May control the rate of chloroplast expansion. Seems to influence stromule (stroma-filled tubular extensions of the plastid envelope membrane) length and frequency.</text>
</comment>
<comment type="subunit">
    <text evidence="5 6 8 9 12 13 16">Self-interacts. Interacts with FTSZ, CDP1/PARC6 (via N-terminus), MIND1 and MINE1 (PubMed:26527658, PubMed:30824505). Part of a complex made of ARC3, ARC6, FTSZ1 and FTSZ2 (PubMed:30824505). Recruited to the middle of the plastid by CDP1/PARC6 where subsequent complex made of CDP1/PARC6, ARC3 and FtsZ proteins can form; this complex enhances the dynamics of Z rings during chloroplast division (PubMed:30824505). Binding to FTSZ2-1 is enabled by ARC6 (PubMed:29138260).</text>
</comment>
<comment type="interaction">
    <interactant intactId="EBI-2367605">
        <id>Q6F6B5</id>
    </interactant>
    <interactant intactId="EBI-2349234">
        <id>Q8VY16</id>
        <label>CDP1</label>
    </interactant>
    <organismsDiffer>false</organismsDiffer>
    <experiments>4</experiments>
</comment>
<comment type="interaction">
    <interactant intactId="EBI-2367605">
        <id>Q6F6B5</id>
    </interactant>
    <interactant intactId="EBI-2119860">
        <id>Q9C4Z7</id>
        <label>MINE1</label>
    </interactant>
    <organismsDiffer>false</organismsDiffer>
    <experiments>3</experiments>
</comment>
<comment type="subcellular location">
    <subcellularLocation>
        <location evidence="4">Plastid</location>
        <location evidence="4">Chloroplast outer membrane</location>
        <topology evidence="4">Peripheral membrane protein</topology>
        <orientation evidence="4">Cytoplasmic side</orientation>
    </subcellularLocation>
    <subcellularLocation>
        <location evidence="5">Plastid</location>
        <location evidence="5">Chloroplast stroma</location>
    </subcellularLocation>
    <text evidence="4 5 16">Distributed in two pools, a first one throughout the stroma, probably to inhibit Z-ring assembly at nondivision sites, and a second one localized to a midplastid ring-like structure (PubMed:30824505). Located at the site of chloroplast division on the outer surface in a ring-shaped structure at the early and middle stages of the process according to PubMed:15356321. Forms ring-like structures, short filaments and discrete foci in the chloroplast stroma according to PubMed:17304239 (PubMed:15356321, PubMed:17304239).</text>
</comment>
<comment type="domain">
    <text evidence="12 16 18">MORN domains promote interaction with ARC6 and CDP1/PARC6 but prevent binding to FTSZ1, FTSZ2, MIND and MINE proteins.</text>
</comment>
<comment type="disruption phenotype">
    <text evidence="3 4 5 7 10 11 14 15 16">Small number of abnormally large and heterogeneous chloroplasts sometimes exhibiting alteration in stromule length and frequency in non-green tissues (e.g. slightly increased stromule frequency in hypocotyl epidermal cells) (PubMed:23936263, PubMed:30824505). Normal shape and number of etioplasts in cotyledons (PubMed:23936263). Misexpression and mislocalization of ADT2 (PubMed:30252596). Formation of multiple MCD1 and MIND1-containing ring structures in dividing chloroplasts, instead of single ring (PubMed:29967285). Slow trunover of FtsZ ring subunits (e.g. FTSZ2-1, FTSZ2-2 and FTSZ1) in contractile rings at the chloroplast midpoint (PubMed:25731613).</text>
</comment>
<comment type="sequence caution" evidence="19">
    <conflict type="erroneous gene model prediction">
        <sequence resource="EMBL-CDS" id="AAD55276"/>
    </conflict>
</comment>
<comment type="sequence caution" evidence="19">
    <conflict type="erroneous gene model prediction">
        <sequence resource="EMBL-CDS" id="AAG51935"/>
    </conflict>
</comment>
<comment type="sequence caution" evidence="19">
    <conflict type="miscellaneous discrepancy">
        <sequence resource="EMBL-CDS" id="BAE99720"/>
    </conflict>
    <text>Intron retention.</text>
</comment>
<name>ARC3_ARATH</name>
<dbReference type="EMBL" id="AB094044">
    <property type="protein sequence ID" value="BAD26731.1"/>
    <property type="molecule type" value="mRNA"/>
</dbReference>
<dbReference type="EMBL" id="AC008263">
    <property type="protein sequence ID" value="AAD55276.1"/>
    <property type="status" value="ALT_SEQ"/>
    <property type="molecule type" value="Genomic_DNA"/>
</dbReference>
<dbReference type="EMBL" id="AC013258">
    <property type="protein sequence ID" value="AAG51935.1"/>
    <property type="status" value="ALT_SEQ"/>
    <property type="molecule type" value="Genomic_DNA"/>
</dbReference>
<dbReference type="EMBL" id="CP002684">
    <property type="protein sequence ID" value="AEE35661.1"/>
    <property type="molecule type" value="Genomic_DNA"/>
</dbReference>
<dbReference type="EMBL" id="AK227735">
    <property type="protein sequence ID" value="BAE99720.1"/>
    <property type="status" value="ALT_SEQ"/>
    <property type="molecule type" value="mRNA"/>
</dbReference>
<dbReference type="PIR" id="A96780">
    <property type="entry name" value="A96780"/>
</dbReference>
<dbReference type="RefSeq" id="NP_177638.2">
    <property type="nucleotide sequence ID" value="NM_106158.5"/>
</dbReference>
<dbReference type="SMR" id="Q6F6B5"/>
<dbReference type="BioGRID" id="29058">
    <property type="interactions" value="3"/>
</dbReference>
<dbReference type="FunCoup" id="Q6F6B5">
    <property type="interactions" value="1671"/>
</dbReference>
<dbReference type="IntAct" id="Q6F6B5">
    <property type="interactions" value="5"/>
</dbReference>
<dbReference type="MINT" id="Q6F6B5"/>
<dbReference type="STRING" id="3702.Q6F6B5"/>
<dbReference type="PaxDb" id="3702-AT1G75010.1"/>
<dbReference type="ProteomicsDB" id="244457"/>
<dbReference type="EnsemblPlants" id="AT1G75010.1">
    <property type="protein sequence ID" value="AT1G75010.1"/>
    <property type="gene ID" value="AT1G75010"/>
</dbReference>
<dbReference type="GeneID" id="843839"/>
<dbReference type="Gramene" id="AT1G75010.1">
    <property type="protein sequence ID" value="AT1G75010.1"/>
    <property type="gene ID" value="AT1G75010"/>
</dbReference>
<dbReference type="KEGG" id="ath:AT1G75010"/>
<dbReference type="Araport" id="AT1G75010"/>
<dbReference type="TAIR" id="AT1G75010">
    <property type="gene designation" value="ARC3"/>
</dbReference>
<dbReference type="eggNOG" id="KOG0231">
    <property type="taxonomic scope" value="Eukaryota"/>
</dbReference>
<dbReference type="HOGENOM" id="CLU_382379_0_0_1"/>
<dbReference type="InParanoid" id="Q6F6B5"/>
<dbReference type="OMA" id="PIRFWTM"/>
<dbReference type="PhylomeDB" id="Q6F6B5"/>
<dbReference type="PRO" id="PR:Q6F6B5"/>
<dbReference type="Proteomes" id="UP000006548">
    <property type="component" value="Chromosome 1"/>
</dbReference>
<dbReference type="ExpressionAtlas" id="Q6F6B5">
    <property type="expression patterns" value="baseline and differential"/>
</dbReference>
<dbReference type="GO" id="GO:0009707">
    <property type="term" value="C:chloroplast outer membrane"/>
    <property type="evidence" value="ECO:0000314"/>
    <property type="project" value="UniProtKB"/>
</dbReference>
<dbReference type="GO" id="GO:0009570">
    <property type="term" value="C:chloroplast stroma"/>
    <property type="evidence" value="ECO:0000314"/>
    <property type="project" value="TAIR"/>
</dbReference>
<dbReference type="GO" id="GO:0098562">
    <property type="term" value="C:cytoplasmic side of membrane"/>
    <property type="evidence" value="ECO:0000314"/>
    <property type="project" value="UniProtKB"/>
</dbReference>
<dbReference type="GO" id="GO:0005829">
    <property type="term" value="C:cytosol"/>
    <property type="evidence" value="ECO:0007005"/>
    <property type="project" value="TAIR"/>
</dbReference>
<dbReference type="GO" id="GO:0005525">
    <property type="term" value="F:GTP binding"/>
    <property type="evidence" value="ECO:0007669"/>
    <property type="project" value="InterPro"/>
</dbReference>
<dbReference type="GO" id="GO:0010020">
    <property type="term" value="P:chloroplast fission"/>
    <property type="evidence" value="ECO:0000315"/>
    <property type="project" value="UniProtKB"/>
</dbReference>
<dbReference type="GO" id="GO:0009657">
    <property type="term" value="P:plastid organization"/>
    <property type="evidence" value="ECO:0000315"/>
    <property type="project" value="TAIR"/>
</dbReference>
<dbReference type="FunFam" id="3.40.50.1440:FF:000055">
    <property type="entry name" value="Protein ACCUMULATION AND REPLICATION OF CHLOROPLASTS 3"/>
    <property type="match status" value="1"/>
</dbReference>
<dbReference type="Gene3D" id="2.20.110.10">
    <property type="entry name" value="Histone H3 K4-specific methyltransferase SET7/9 N-terminal domain"/>
    <property type="match status" value="2"/>
</dbReference>
<dbReference type="Gene3D" id="3.40.50.1440">
    <property type="entry name" value="Tubulin/FtsZ, GTPase domain"/>
    <property type="match status" value="1"/>
</dbReference>
<dbReference type="InterPro" id="IPR003409">
    <property type="entry name" value="MORN"/>
</dbReference>
<dbReference type="InterPro" id="IPR036525">
    <property type="entry name" value="Tubulin/FtsZ_GTPase_sf"/>
</dbReference>
<dbReference type="InterPro" id="IPR003008">
    <property type="entry name" value="Tubulin_FtsZ_GTPase"/>
</dbReference>
<dbReference type="PANTHER" id="PTHR43215:SF15">
    <property type="entry name" value="PROTEIN ACCUMULATION AND REPLICATION OF CHLOROPLASTS 3, CHLOROPLASTIC"/>
    <property type="match status" value="1"/>
</dbReference>
<dbReference type="PANTHER" id="PTHR43215">
    <property type="entry name" value="RADIAL SPOKE HEAD 1 HOMOLOG"/>
    <property type="match status" value="1"/>
</dbReference>
<dbReference type="Pfam" id="PF02493">
    <property type="entry name" value="MORN"/>
    <property type="match status" value="3"/>
</dbReference>
<dbReference type="PRINTS" id="PR00423">
    <property type="entry name" value="CELLDVISFTSZ"/>
</dbReference>
<dbReference type="SMART" id="SM00698">
    <property type="entry name" value="MORN"/>
    <property type="match status" value="2"/>
</dbReference>
<dbReference type="SUPFAM" id="SSF82185">
    <property type="entry name" value="Histone H3 K4-specific methyltransferase SET7/9 N-terminal domain"/>
    <property type="match status" value="1"/>
</dbReference>
<dbReference type="SUPFAM" id="SSF52490">
    <property type="entry name" value="Tubulin nucleotide-binding domain-like"/>
    <property type="match status" value="1"/>
</dbReference>
<sequence length="741" mass="82583">MPISMELPVFSTLRVPLFSRLALLPTFGVPFSSLGATTRLNCTSRKARRICVMCLVRDSAPIETCERAGEDGSDEFIEVLVIGSRKESIMDSCLDSPFPSLPLRFWSISKDSSGGLVLQQRLNHQDNALKTMNPIELLQSRPRAFILVASAGYGSDQVEAINILSAVRSGGNLAVAVLLKPFSFEGRKRLEEVNELARKLQQHTNFCIDIDIEVLLQKDLVTLDEALRNANNAVSMAINAASALISGMHGNFIDVMHKDLKELEGSEVKTILESYKEAKVGFGVGHNLKTSILRAIYDCPFFRPGLKDLNAIICIVASSVPLQKKDVKTILRTFRQTMEYTGDIIVSTVHEPDLEPKVRVTTFFILSSSEVETSNKGNIFSGLVPFVLNIFTRYRSQLQKETNIGLGETPVSIKDSADSTDVKTSNQNIEEFEIDSEDLLEVSENGDDSEYPLKEGEPSRNSRLDLKDENVEDFGAIQREPIANWSMDQGYQIEQKWQADSGDTAVLSLGIVNLPVGVRPSKKLNSNLSVASQLSRKADSREESFFNPNGSTKDSSDTASTLLSEKYADFTKQRNLSARASSMLEAERDSSKRWSPILEMQYRGGLFKGRCQGGLPEGKGRLVLGDGSIYDGMWHNGKRSGLGTFYFKNGDVFQGTWREDLIHGKGWFYFHKGDRWFANFWKGKASGEGRFYSKSGEIFFGHFKDGWRHGQFLCIDLDGTRYSETWDDGVLIDRKQVDAGD</sequence>
<proteinExistence type="evidence at protein level"/>